<reference key="1">
    <citation type="journal article" date="2002" name="Proc. Natl. Acad. Sci. U.S.A.">
        <title>The Brucella suis genome reveals fundamental similarities between animal and plant pathogens and symbionts.</title>
        <authorList>
            <person name="Paulsen I.T."/>
            <person name="Seshadri R."/>
            <person name="Nelson K.E."/>
            <person name="Eisen J.A."/>
            <person name="Heidelberg J.F."/>
            <person name="Read T.D."/>
            <person name="Dodson R.J."/>
            <person name="Umayam L.A."/>
            <person name="Brinkac L.M."/>
            <person name="Beanan M.J."/>
            <person name="Daugherty S.C."/>
            <person name="DeBoy R.T."/>
            <person name="Durkin A.S."/>
            <person name="Kolonay J.F."/>
            <person name="Madupu R."/>
            <person name="Nelson W.C."/>
            <person name="Ayodeji B."/>
            <person name="Kraul M."/>
            <person name="Shetty J."/>
            <person name="Malek J.A."/>
            <person name="Van Aken S.E."/>
            <person name="Riedmuller S."/>
            <person name="Tettelin H."/>
            <person name="Gill S.R."/>
            <person name="White O."/>
            <person name="Salzberg S.L."/>
            <person name="Hoover D.L."/>
            <person name="Lindler L.E."/>
            <person name="Halling S.M."/>
            <person name="Boyle S.M."/>
            <person name="Fraser C.M."/>
        </authorList>
    </citation>
    <scope>NUCLEOTIDE SEQUENCE [LARGE SCALE GENOMIC DNA]</scope>
    <source>
        <strain>1330</strain>
    </source>
</reference>
<reference key="2">
    <citation type="journal article" date="2011" name="J. Bacteriol.">
        <title>Revised genome sequence of Brucella suis 1330.</title>
        <authorList>
            <person name="Tae H."/>
            <person name="Shallom S."/>
            <person name="Settlage R."/>
            <person name="Preston D."/>
            <person name="Adams L.G."/>
            <person name="Garner H.R."/>
        </authorList>
    </citation>
    <scope>NUCLEOTIDE SEQUENCE [LARGE SCALE GENOMIC DNA]</scope>
    <source>
        <strain>1330</strain>
    </source>
</reference>
<sequence>MRDMMGMMKQAKELQAKMKAMQDEIATMEASASSGGGLVTVTLSGKGTLSALKIDPSLMKEDEVEILEDLIIAAHNDAKAKLEAAMAEKTQSLTAGLPIPPGFKLPF</sequence>
<feature type="chain" id="PRO_0000170372" description="Nucleoid-associated protein BR0033/BS1330_I0033">
    <location>
        <begin position="1"/>
        <end position="107"/>
    </location>
</feature>
<organism>
    <name type="scientific">Brucella suis biovar 1 (strain 1330)</name>
    <dbReference type="NCBI Taxonomy" id="204722"/>
    <lineage>
        <taxon>Bacteria</taxon>
        <taxon>Pseudomonadati</taxon>
        <taxon>Pseudomonadota</taxon>
        <taxon>Alphaproteobacteria</taxon>
        <taxon>Hyphomicrobiales</taxon>
        <taxon>Brucellaceae</taxon>
        <taxon>Brucella/Ochrobactrum group</taxon>
        <taxon>Brucella</taxon>
    </lineage>
</organism>
<protein>
    <recommendedName>
        <fullName evidence="1">Nucleoid-associated protein BR0033/BS1330_I0033</fullName>
    </recommendedName>
</protein>
<gene>
    <name type="ordered locus">BR0033</name>
    <name type="ordered locus">BS1330_I0033</name>
</gene>
<evidence type="ECO:0000255" key="1">
    <source>
        <dbReference type="HAMAP-Rule" id="MF_00274"/>
    </source>
</evidence>
<proteinExistence type="inferred from homology"/>
<comment type="function">
    <text evidence="1">Binds to DNA and alters its conformation. May be involved in regulation of gene expression, nucleoid organization and DNA protection.</text>
</comment>
<comment type="subunit">
    <text evidence="1">Homodimer.</text>
</comment>
<comment type="subcellular location">
    <subcellularLocation>
        <location evidence="1">Cytoplasm</location>
        <location evidence="1">Nucleoid</location>
    </subcellularLocation>
</comment>
<comment type="similarity">
    <text evidence="1">Belongs to the YbaB/EbfC family.</text>
</comment>
<accession>P67261</accession>
<accession>G0KAK5</accession>
<accession>Q8YEG9</accession>
<name>Y033_BRUSU</name>
<keyword id="KW-0963">Cytoplasm</keyword>
<keyword id="KW-0238">DNA-binding</keyword>
<dbReference type="EMBL" id="AE014291">
    <property type="protein sequence ID" value="AAN28990.1"/>
    <property type="molecule type" value="Genomic_DNA"/>
</dbReference>
<dbReference type="EMBL" id="CP002997">
    <property type="protein sequence ID" value="AEM17402.1"/>
    <property type="molecule type" value="Genomic_DNA"/>
</dbReference>
<dbReference type="RefSeq" id="WP_002965280.1">
    <property type="nucleotide sequence ID" value="NZ_KN046804.1"/>
</dbReference>
<dbReference type="SMR" id="P67261"/>
<dbReference type="KEGG" id="bms:BR0033"/>
<dbReference type="KEGG" id="bsi:BS1330_I0033"/>
<dbReference type="PATRIC" id="fig|204722.21.peg.3001"/>
<dbReference type="HOGENOM" id="CLU_140930_0_1_5"/>
<dbReference type="PhylomeDB" id="P67261"/>
<dbReference type="Proteomes" id="UP000007104">
    <property type="component" value="Chromosome I"/>
</dbReference>
<dbReference type="GO" id="GO:0043590">
    <property type="term" value="C:bacterial nucleoid"/>
    <property type="evidence" value="ECO:0007669"/>
    <property type="project" value="UniProtKB-UniRule"/>
</dbReference>
<dbReference type="GO" id="GO:0005829">
    <property type="term" value="C:cytosol"/>
    <property type="evidence" value="ECO:0007669"/>
    <property type="project" value="TreeGrafter"/>
</dbReference>
<dbReference type="GO" id="GO:0003677">
    <property type="term" value="F:DNA binding"/>
    <property type="evidence" value="ECO:0007669"/>
    <property type="project" value="UniProtKB-UniRule"/>
</dbReference>
<dbReference type="Gene3D" id="3.30.1310.10">
    <property type="entry name" value="Nucleoid-associated protein YbaB-like domain"/>
    <property type="match status" value="1"/>
</dbReference>
<dbReference type="HAMAP" id="MF_00274">
    <property type="entry name" value="DNA_YbaB_EbfC"/>
    <property type="match status" value="1"/>
</dbReference>
<dbReference type="InterPro" id="IPR036894">
    <property type="entry name" value="YbaB-like_sf"/>
</dbReference>
<dbReference type="InterPro" id="IPR004401">
    <property type="entry name" value="YbaB/EbfC"/>
</dbReference>
<dbReference type="NCBIfam" id="TIGR00103">
    <property type="entry name" value="DNA_YbaB_EbfC"/>
    <property type="match status" value="1"/>
</dbReference>
<dbReference type="PANTHER" id="PTHR33449">
    <property type="entry name" value="NUCLEOID-ASSOCIATED PROTEIN YBAB"/>
    <property type="match status" value="1"/>
</dbReference>
<dbReference type="PANTHER" id="PTHR33449:SF1">
    <property type="entry name" value="NUCLEOID-ASSOCIATED PROTEIN YBAB"/>
    <property type="match status" value="1"/>
</dbReference>
<dbReference type="Pfam" id="PF02575">
    <property type="entry name" value="YbaB_DNA_bd"/>
    <property type="match status" value="1"/>
</dbReference>
<dbReference type="PIRSF" id="PIRSF004555">
    <property type="entry name" value="UCP004555"/>
    <property type="match status" value="1"/>
</dbReference>
<dbReference type="SUPFAM" id="SSF82607">
    <property type="entry name" value="YbaB-like"/>
    <property type="match status" value="1"/>
</dbReference>